<evidence type="ECO:0000255" key="1">
    <source>
        <dbReference type="HAMAP-Rule" id="MF_01343"/>
    </source>
</evidence>
<evidence type="ECO:0000305" key="2"/>
<comment type="function">
    <text evidence="1">One of the primary rRNA binding proteins, it binds directly to 16S rRNA where it helps nucleate assembly of the platform of the 30S subunit by binding and bridging several RNA helices of the 16S rRNA.</text>
</comment>
<comment type="function">
    <text evidence="1">Forms an intersubunit bridge (bridge B4) with the 23S rRNA of the 50S subunit in the ribosome.</text>
</comment>
<comment type="subunit">
    <text evidence="1">Part of the 30S ribosomal subunit. Forms a bridge to the 50S subunit in the 70S ribosome, contacting the 23S rRNA.</text>
</comment>
<comment type="similarity">
    <text evidence="1">Belongs to the universal ribosomal protein uS15 family.</text>
</comment>
<accession>Q2GJV4</accession>
<keyword id="KW-0687">Ribonucleoprotein</keyword>
<keyword id="KW-0689">Ribosomal protein</keyword>
<keyword id="KW-0694">RNA-binding</keyword>
<keyword id="KW-0699">rRNA-binding</keyword>
<organism>
    <name type="scientific">Anaplasma phagocytophilum (strain HZ)</name>
    <dbReference type="NCBI Taxonomy" id="212042"/>
    <lineage>
        <taxon>Bacteria</taxon>
        <taxon>Pseudomonadati</taxon>
        <taxon>Pseudomonadota</taxon>
        <taxon>Alphaproteobacteria</taxon>
        <taxon>Rickettsiales</taxon>
        <taxon>Anaplasmataceae</taxon>
        <taxon>Anaplasma</taxon>
        <taxon>phagocytophilum group</taxon>
    </lineage>
</organism>
<dbReference type="EMBL" id="CP000235">
    <property type="protein sequence ID" value="ABD43313.1"/>
    <property type="molecule type" value="Genomic_DNA"/>
</dbReference>
<dbReference type="RefSeq" id="WP_011450868.1">
    <property type="nucleotide sequence ID" value="NC_007797.1"/>
</dbReference>
<dbReference type="SMR" id="Q2GJV4"/>
<dbReference type="STRING" id="212042.APH_0768"/>
<dbReference type="PaxDb" id="212042-APH_0768"/>
<dbReference type="EnsemblBacteria" id="ABD43313">
    <property type="protein sequence ID" value="ABD43313"/>
    <property type="gene ID" value="APH_0768"/>
</dbReference>
<dbReference type="GeneID" id="92748198"/>
<dbReference type="KEGG" id="aph:APH_0768"/>
<dbReference type="eggNOG" id="COG0184">
    <property type="taxonomic scope" value="Bacteria"/>
</dbReference>
<dbReference type="HOGENOM" id="CLU_148518_0_0_5"/>
<dbReference type="Proteomes" id="UP000001943">
    <property type="component" value="Chromosome"/>
</dbReference>
<dbReference type="GO" id="GO:0022627">
    <property type="term" value="C:cytosolic small ribosomal subunit"/>
    <property type="evidence" value="ECO:0007669"/>
    <property type="project" value="TreeGrafter"/>
</dbReference>
<dbReference type="GO" id="GO:0019843">
    <property type="term" value="F:rRNA binding"/>
    <property type="evidence" value="ECO:0007669"/>
    <property type="project" value="UniProtKB-UniRule"/>
</dbReference>
<dbReference type="GO" id="GO:0003735">
    <property type="term" value="F:structural constituent of ribosome"/>
    <property type="evidence" value="ECO:0007669"/>
    <property type="project" value="InterPro"/>
</dbReference>
<dbReference type="GO" id="GO:0006412">
    <property type="term" value="P:translation"/>
    <property type="evidence" value="ECO:0007669"/>
    <property type="project" value="UniProtKB-UniRule"/>
</dbReference>
<dbReference type="CDD" id="cd00353">
    <property type="entry name" value="Ribosomal_S15p_S13e"/>
    <property type="match status" value="1"/>
</dbReference>
<dbReference type="FunFam" id="1.10.287.10:FF:000002">
    <property type="entry name" value="30S ribosomal protein S15"/>
    <property type="match status" value="1"/>
</dbReference>
<dbReference type="Gene3D" id="1.10.287.10">
    <property type="entry name" value="S15/NS1, RNA-binding"/>
    <property type="match status" value="1"/>
</dbReference>
<dbReference type="HAMAP" id="MF_01343_B">
    <property type="entry name" value="Ribosomal_uS15_B"/>
    <property type="match status" value="1"/>
</dbReference>
<dbReference type="InterPro" id="IPR000589">
    <property type="entry name" value="Ribosomal_uS15"/>
</dbReference>
<dbReference type="InterPro" id="IPR005290">
    <property type="entry name" value="Ribosomal_uS15_bac-type"/>
</dbReference>
<dbReference type="InterPro" id="IPR009068">
    <property type="entry name" value="uS15_NS1_RNA-bd_sf"/>
</dbReference>
<dbReference type="NCBIfam" id="TIGR00952">
    <property type="entry name" value="S15_bact"/>
    <property type="match status" value="1"/>
</dbReference>
<dbReference type="PANTHER" id="PTHR23321">
    <property type="entry name" value="RIBOSOMAL PROTEIN S15, BACTERIAL AND ORGANELLAR"/>
    <property type="match status" value="1"/>
</dbReference>
<dbReference type="PANTHER" id="PTHR23321:SF26">
    <property type="entry name" value="SMALL RIBOSOMAL SUBUNIT PROTEIN US15M"/>
    <property type="match status" value="1"/>
</dbReference>
<dbReference type="Pfam" id="PF00312">
    <property type="entry name" value="Ribosomal_S15"/>
    <property type="match status" value="1"/>
</dbReference>
<dbReference type="SMART" id="SM01387">
    <property type="entry name" value="Ribosomal_S15"/>
    <property type="match status" value="1"/>
</dbReference>
<dbReference type="SUPFAM" id="SSF47060">
    <property type="entry name" value="S15/NS1 RNA-binding domain"/>
    <property type="match status" value="1"/>
</dbReference>
<protein>
    <recommendedName>
        <fullName evidence="1">Small ribosomal subunit protein uS15</fullName>
    </recommendedName>
    <alternativeName>
        <fullName evidence="2">30S ribosomal protein S15</fullName>
    </alternativeName>
</protein>
<proteinExistence type="inferred from homology"/>
<reference key="1">
    <citation type="journal article" date="2006" name="PLoS Genet.">
        <title>Comparative genomics of emerging human ehrlichiosis agents.</title>
        <authorList>
            <person name="Dunning Hotopp J.C."/>
            <person name="Lin M."/>
            <person name="Madupu R."/>
            <person name="Crabtree J."/>
            <person name="Angiuoli S.V."/>
            <person name="Eisen J.A."/>
            <person name="Seshadri R."/>
            <person name="Ren Q."/>
            <person name="Wu M."/>
            <person name="Utterback T.R."/>
            <person name="Smith S."/>
            <person name="Lewis M."/>
            <person name="Khouri H."/>
            <person name="Zhang C."/>
            <person name="Niu H."/>
            <person name="Lin Q."/>
            <person name="Ohashi N."/>
            <person name="Zhi N."/>
            <person name="Nelson W.C."/>
            <person name="Brinkac L.M."/>
            <person name="Dodson R.J."/>
            <person name="Rosovitz M.J."/>
            <person name="Sundaram J.P."/>
            <person name="Daugherty S.C."/>
            <person name="Davidsen T."/>
            <person name="Durkin A.S."/>
            <person name="Gwinn M.L."/>
            <person name="Haft D.H."/>
            <person name="Selengut J.D."/>
            <person name="Sullivan S.A."/>
            <person name="Zafar N."/>
            <person name="Zhou L."/>
            <person name="Benahmed F."/>
            <person name="Forberger H."/>
            <person name="Halpin R."/>
            <person name="Mulligan S."/>
            <person name="Robinson J."/>
            <person name="White O."/>
            <person name="Rikihisa Y."/>
            <person name="Tettelin H."/>
        </authorList>
    </citation>
    <scope>NUCLEOTIDE SEQUENCE [LARGE SCALE GENOMIC DNA]</scope>
    <source>
        <strain>HZ</strain>
    </source>
</reference>
<name>RS15_ANAPZ</name>
<gene>
    <name evidence="1" type="primary">rpsO</name>
    <name type="ordered locus">APH_0768</name>
</gene>
<feature type="chain" id="PRO_0000255477" description="Small ribosomal subunit protein uS15">
    <location>
        <begin position="1"/>
        <end position="93"/>
    </location>
</feature>
<sequence>MSITPSKKSELISEYRIKEGDTGSAYVQCAILSERIRNLTEHLRIHKKDYHCRRGLMVLVCKRRKRLQYIKNKYGSDLYLDLVKKLGIRDVFH</sequence>